<comment type="function">
    <text evidence="1">Catalyzes two activities which are involved in the cyclic version of arginine biosynthesis: the synthesis of acetylglutamate from glutamate and acetyl-CoA, and of ornithine by transacetylation between acetylornithine and glutamate.</text>
</comment>
<comment type="catalytic activity">
    <reaction evidence="1">
        <text>N(2)-acetyl-L-ornithine + L-glutamate = N-acetyl-L-glutamate + L-ornithine</text>
        <dbReference type="Rhea" id="RHEA:15349"/>
        <dbReference type="ChEBI" id="CHEBI:29985"/>
        <dbReference type="ChEBI" id="CHEBI:44337"/>
        <dbReference type="ChEBI" id="CHEBI:46911"/>
        <dbReference type="ChEBI" id="CHEBI:57805"/>
        <dbReference type="EC" id="2.3.1.35"/>
    </reaction>
</comment>
<comment type="catalytic activity">
    <reaction evidence="1">
        <text>L-glutamate + acetyl-CoA = N-acetyl-L-glutamate + CoA + H(+)</text>
        <dbReference type="Rhea" id="RHEA:24292"/>
        <dbReference type="ChEBI" id="CHEBI:15378"/>
        <dbReference type="ChEBI" id="CHEBI:29985"/>
        <dbReference type="ChEBI" id="CHEBI:44337"/>
        <dbReference type="ChEBI" id="CHEBI:57287"/>
        <dbReference type="ChEBI" id="CHEBI:57288"/>
        <dbReference type="EC" id="2.3.1.1"/>
    </reaction>
</comment>
<comment type="pathway">
    <text evidence="1">Amino-acid biosynthesis; L-arginine biosynthesis; L-ornithine and N-acetyl-L-glutamate from L-glutamate and N(2)-acetyl-L-ornithine (cyclic): step 1/1.</text>
</comment>
<comment type="pathway">
    <text evidence="1">Amino-acid biosynthesis; L-arginine biosynthesis; N(2)-acetyl-L-ornithine from L-glutamate: step 1/4.</text>
</comment>
<comment type="subunit">
    <text evidence="1">Heterodimer of an alpha and a beta chain.</text>
</comment>
<comment type="subcellular location">
    <subcellularLocation>
        <location evidence="1">Mitochondrion matrix</location>
    </subcellularLocation>
</comment>
<comment type="PTM">
    <text evidence="1">The alpha and beta chains are autoproteolytically processed from a single precursor protein within the mitochondrion.</text>
</comment>
<comment type="miscellaneous">
    <text evidence="1">This protein may be expected to contain an N-terminal transit peptide but none has been predicted.</text>
</comment>
<comment type="similarity">
    <text evidence="1">Belongs to the ArgJ family.</text>
</comment>
<feature type="chain" id="PRO_0000398008" description="Arginine biosynthesis bifunctional protein ArgJ alpha chain" evidence="1">
    <location>
        <begin position="1"/>
        <end position="240"/>
    </location>
</feature>
<feature type="chain" id="PRO_0000398009" description="Arginine biosynthesis bifunctional protein ArgJ beta chain" evidence="1">
    <location>
        <begin position="241"/>
        <end position="473"/>
    </location>
</feature>
<feature type="active site" description="Nucleophile" evidence="1">
    <location>
        <position position="241"/>
    </location>
</feature>
<feature type="binding site" evidence="1">
    <location>
        <position position="201"/>
    </location>
    <ligand>
        <name>substrate</name>
    </ligand>
</feature>
<feature type="binding site" evidence="1">
    <location>
        <position position="230"/>
    </location>
    <ligand>
        <name>substrate</name>
    </ligand>
</feature>
<feature type="binding site" evidence="1">
    <location>
        <position position="241"/>
    </location>
    <ligand>
        <name>substrate</name>
    </ligand>
</feature>
<feature type="binding site" evidence="1">
    <location>
        <position position="328"/>
    </location>
    <ligand>
        <name>substrate</name>
    </ligand>
</feature>
<feature type="binding site" evidence="1">
    <location>
        <position position="468"/>
    </location>
    <ligand>
        <name>substrate</name>
    </ligand>
</feature>
<feature type="binding site" evidence="1">
    <location>
        <position position="473"/>
    </location>
    <ligand>
        <name>substrate</name>
    </ligand>
</feature>
<feature type="site" description="Involved in the stabilization of negative charge on the oxyanion by the formation of the oxyanion hole" evidence="1">
    <location>
        <position position="162"/>
    </location>
</feature>
<feature type="site" description="Involved in the stabilization of negative charge on the oxyanion by the formation of the oxyanion hole" evidence="1">
    <location>
        <position position="163"/>
    </location>
</feature>
<feature type="site" description="Cleavage; by autolysis" evidence="1">
    <location>
        <begin position="240"/>
        <end position="241"/>
    </location>
</feature>
<evidence type="ECO:0000255" key="1">
    <source>
        <dbReference type="HAMAP-Rule" id="MF_03124"/>
    </source>
</evidence>
<proteinExistence type="inferred from homology"/>
<name>ARGJ_BLAGS</name>
<sequence>MKSTQSFSAVAGFVRLPKSSLGQVRYYSILKDMSIPASKQKFIPSSGTYPKGFLVAGAHAGVKESNTRFPDVALICSETPCSAAAVFTANKFQAAPVQVSKQVLETRQGTGIRGVVVNSGCANAVTGKGGLEDAKMMSAKVDECTGTPSADPQNTSTLVMSTGVIGQRLPIKKILDTIPTAHSNLASNHSAWLTAARAICTTDTFPKLLSRTFTLPSSPNRAYHLAGMTKGAGMIHPNMATLLGILCTDVPISPSVLNPLLTHAVSRSFNSISIDGDTSTNDTVALLANGAAGGETITTTSSPDYTAMQTILTNFAQSLAQLVVRDGEGATKFVTVRVRNSPSHADAKVIASTIARSPLVKTALYGKDANWGRILCAIGYSQGIAEGTVVPERTSVSFKPVDGSEELKLLVNGEPEAVDEERAARILQDEDLEIVVDLGGGEKGDKGLGGEEGVYWFCDFSHEYVTINGDYRT</sequence>
<dbReference type="EC" id="2.3.1.35" evidence="1"/>
<dbReference type="EC" id="2.3.1.1" evidence="1"/>
<dbReference type="EMBL" id="GG657471">
    <property type="protein sequence ID" value="OAT13266.1"/>
    <property type="molecule type" value="Genomic_DNA"/>
</dbReference>
<dbReference type="RefSeq" id="XP_002621132.1">
    <property type="nucleotide sequence ID" value="XM_002621086.2"/>
</dbReference>
<dbReference type="SMR" id="C5K110"/>
<dbReference type="STRING" id="559298.C5K110"/>
<dbReference type="MEROPS" id="T05.001"/>
<dbReference type="GeneID" id="8501617"/>
<dbReference type="KEGG" id="bgh:BDBG_08504"/>
<dbReference type="VEuPathDB" id="FungiDB:BDBG_08504"/>
<dbReference type="HOGENOM" id="CLU_027172_1_0_1"/>
<dbReference type="OrthoDB" id="2017946at2759"/>
<dbReference type="UniPathway" id="UPA00068">
    <property type="reaction ID" value="UER00106"/>
</dbReference>
<dbReference type="UniPathway" id="UPA00068">
    <property type="reaction ID" value="UER00111"/>
</dbReference>
<dbReference type="Proteomes" id="UP000002038">
    <property type="component" value="Unassembled WGS sequence"/>
</dbReference>
<dbReference type="GO" id="GO:0005759">
    <property type="term" value="C:mitochondrial matrix"/>
    <property type="evidence" value="ECO:0007669"/>
    <property type="project" value="UniProtKB-SubCell"/>
</dbReference>
<dbReference type="GO" id="GO:0004358">
    <property type="term" value="F:glutamate N-acetyltransferase activity"/>
    <property type="evidence" value="ECO:0007669"/>
    <property type="project" value="UniProtKB-UniRule"/>
</dbReference>
<dbReference type="GO" id="GO:0004042">
    <property type="term" value="F:L-glutamate N-acetyltransferase activity"/>
    <property type="evidence" value="ECO:0007669"/>
    <property type="project" value="UniProtKB-UniRule"/>
</dbReference>
<dbReference type="GO" id="GO:0006526">
    <property type="term" value="P:L-arginine biosynthetic process"/>
    <property type="evidence" value="ECO:0007669"/>
    <property type="project" value="UniProtKB-UniRule"/>
</dbReference>
<dbReference type="GO" id="GO:0006592">
    <property type="term" value="P:ornithine biosynthetic process"/>
    <property type="evidence" value="ECO:0007669"/>
    <property type="project" value="TreeGrafter"/>
</dbReference>
<dbReference type="CDD" id="cd02152">
    <property type="entry name" value="OAT"/>
    <property type="match status" value="1"/>
</dbReference>
<dbReference type="FunFam" id="3.60.70.12:FF:000001">
    <property type="entry name" value="Arginine biosynthesis bifunctional protein ArgJ, chloroplastic"/>
    <property type="match status" value="1"/>
</dbReference>
<dbReference type="FunFam" id="3.10.20.340:FF:000002">
    <property type="entry name" value="Arginine biosynthesis bifunctional protein ArgJ, mitochondrial"/>
    <property type="match status" value="1"/>
</dbReference>
<dbReference type="FunFam" id="3.30.2330.10:FF:000001">
    <property type="entry name" value="Arginine biosynthesis bifunctional protein ArgJ, mitochondrial"/>
    <property type="match status" value="1"/>
</dbReference>
<dbReference type="Gene3D" id="3.30.2330.10">
    <property type="entry name" value="arginine biosynthesis bifunctional protein suprefamily"/>
    <property type="match status" value="1"/>
</dbReference>
<dbReference type="Gene3D" id="3.10.20.340">
    <property type="entry name" value="ArgJ beta chain, C-terminal domain"/>
    <property type="match status" value="1"/>
</dbReference>
<dbReference type="Gene3D" id="3.60.70.12">
    <property type="entry name" value="L-amino peptidase D-ALA esterase/amidase"/>
    <property type="match status" value="1"/>
</dbReference>
<dbReference type="HAMAP" id="MF_01106">
    <property type="entry name" value="ArgJ"/>
    <property type="match status" value="1"/>
</dbReference>
<dbReference type="InterPro" id="IPR002813">
    <property type="entry name" value="Arg_biosynth_ArgJ"/>
</dbReference>
<dbReference type="InterPro" id="IPR016117">
    <property type="entry name" value="ArgJ-like_dom_sf"/>
</dbReference>
<dbReference type="InterPro" id="IPR042195">
    <property type="entry name" value="ArgJ_beta_C"/>
</dbReference>
<dbReference type="NCBIfam" id="TIGR00120">
    <property type="entry name" value="ArgJ"/>
    <property type="match status" value="1"/>
</dbReference>
<dbReference type="NCBIfam" id="NF003802">
    <property type="entry name" value="PRK05388.1"/>
    <property type="match status" value="1"/>
</dbReference>
<dbReference type="PANTHER" id="PTHR23100">
    <property type="entry name" value="ARGININE BIOSYNTHESIS BIFUNCTIONAL PROTEIN ARGJ"/>
    <property type="match status" value="1"/>
</dbReference>
<dbReference type="PANTHER" id="PTHR23100:SF0">
    <property type="entry name" value="ARGININE BIOSYNTHESIS BIFUNCTIONAL PROTEIN ARGJ, MITOCHONDRIAL"/>
    <property type="match status" value="1"/>
</dbReference>
<dbReference type="Pfam" id="PF01960">
    <property type="entry name" value="ArgJ"/>
    <property type="match status" value="1"/>
</dbReference>
<dbReference type="SUPFAM" id="SSF56266">
    <property type="entry name" value="DmpA/ArgJ-like"/>
    <property type="match status" value="1"/>
</dbReference>
<accession>C5K110</accession>
<accession>A0A179UYV8</accession>
<keyword id="KW-0012">Acyltransferase</keyword>
<keyword id="KW-0028">Amino-acid biosynthesis</keyword>
<keyword id="KW-0055">Arginine biosynthesis</keyword>
<keyword id="KW-0068">Autocatalytic cleavage</keyword>
<keyword id="KW-0496">Mitochondrion</keyword>
<keyword id="KW-0511">Multifunctional enzyme</keyword>
<keyword id="KW-1185">Reference proteome</keyword>
<keyword id="KW-0808">Transferase</keyword>
<protein>
    <recommendedName>
        <fullName evidence="1">Arginine biosynthesis bifunctional protein ArgJ, mitochondrial</fullName>
    </recommendedName>
    <domain>
        <recommendedName>
            <fullName evidence="1">Glutamate N-acetyltransferase</fullName>
            <shortName evidence="1">GAT</shortName>
            <ecNumber evidence="1">2.3.1.35</ecNumber>
        </recommendedName>
        <alternativeName>
            <fullName evidence="1">Ornithine acetyltransferase</fullName>
            <shortName evidence="1">OATase</shortName>
        </alternativeName>
        <alternativeName>
            <fullName evidence="1">Ornithine transacetylase</fullName>
        </alternativeName>
    </domain>
    <domain>
        <recommendedName>
            <fullName evidence="1">Amino-acid acetyltransferase</fullName>
            <ecNumber evidence="1">2.3.1.1</ecNumber>
        </recommendedName>
        <alternativeName>
            <fullName evidence="1">N-acetylglutamate synthase</fullName>
            <shortName evidence="1">AGS</shortName>
        </alternativeName>
    </domain>
    <component>
        <recommendedName>
            <fullName evidence="1">Arginine biosynthesis bifunctional protein ArgJ alpha chain</fullName>
        </recommendedName>
    </component>
    <component>
        <recommendedName>
            <fullName evidence="1">Arginine biosynthesis bifunctional protein ArgJ beta chain</fullName>
        </recommendedName>
    </component>
</protein>
<reference key="1">
    <citation type="journal article" date="2015" name="PLoS Genet.">
        <title>The dynamic genome and transcriptome of the human fungal pathogen Blastomyces and close relative Emmonsia.</title>
        <authorList>
            <person name="Munoz J.F."/>
            <person name="Gauthier G.M."/>
            <person name="Desjardins C.A."/>
            <person name="Gallo J.E."/>
            <person name="Holder J."/>
            <person name="Sullivan T.D."/>
            <person name="Marty A.J."/>
            <person name="Carmen J.C."/>
            <person name="Chen Z."/>
            <person name="Ding L."/>
            <person name="Gujja S."/>
            <person name="Magrini V."/>
            <person name="Misas E."/>
            <person name="Mitreva M."/>
            <person name="Priest M."/>
            <person name="Saif S."/>
            <person name="Whiston E.A."/>
            <person name="Young S."/>
            <person name="Zeng Q."/>
            <person name="Goldman W.E."/>
            <person name="Mardis E.R."/>
            <person name="Taylor J.W."/>
            <person name="McEwen J.G."/>
            <person name="Clay O.K."/>
            <person name="Klein B.S."/>
            <person name="Cuomo C.A."/>
        </authorList>
    </citation>
    <scope>NUCLEOTIDE SEQUENCE [LARGE SCALE GENOMIC DNA]</scope>
    <source>
        <strain>SLH14081</strain>
    </source>
</reference>
<organism>
    <name type="scientific">Blastomyces gilchristii (strain SLH14081)</name>
    <name type="common">Blastomyces dermatitidis</name>
    <dbReference type="NCBI Taxonomy" id="559298"/>
    <lineage>
        <taxon>Eukaryota</taxon>
        <taxon>Fungi</taxon>
        <taxon>Dikarya</taxon>
        <taxon>Ascomycota</taxon>
        <taxon>Pezizomycotina</taxon>
        <taxon>Eurotiomycetes</taxon>
        <taxon>Eurotiomycetidae</taxon>
        <taxon>Onygenales</taxon>
        <taxon>Ajellomycetaceae</taxon>
        <taxon>Blastomyces</taxon>
    </lineage>
</organism>
<gene>
    <name type="ORF">BDBG_08504</name>
</gene>